<proteinExistence type="inferred from homology"/>
<name>RBFA_BRUSI</name>
<protein>
    <recommendedName>
        <fullName evidence="1">Ribosome-binding factor A</fullName>
    </recommendedName>
</protein>
<evidence type="ECO:0000255" key="1">
    <source>
        <dbReference type="HAMAP-Rule" id="MF_00003"/>
    </source>
</evidence>
<evidence type="ECO:0000256" key="2">
    <source>
        <dbReference type="SAM" id="MobiDB-lite"/>
    </source>
</evidence>
<feature type="chain" id="PRO_1000073752" description="Ribosome-binding factor A">
    <location>
        <begin position="1"/>
        <end position="150"/>
    </location>
</feature>
<feature type="region of interest" description="Disordered" evidence="2">
    <location>
        <begin position="126"/>
        <end position="150"/>
    </location>
</feature>
<dbReference type="EMBL" id="CP000911">
    <property type="protein sequence ID" value="ABY39013.1"/>
    <property type="molecule type" value="Genomic_DNA"/>
</dbReference>
<dbReference type="RefSeq" id="WP_006071839.1">
    <property type="nucleotide sequence ID" value="NC_010169.1"/>
</dbReference>
<dbReference type="SMR" id="B0CK12"/>
<dbReference type="KEGG" id="bmt:BSUIS_A2003"/>
<dbReference type="HOGENOM" id="CLU_089475_1_0_5"/>
<dbReference type="Proteomes" id="UP000008545">
    <property type="component" value="Chromosome I"/>
</dbReference>
<dbReference type="GO" id="GO:0005829">
    <property type="term" value="C:cytosol"/>
    <property type="evidence" value="ECO:0007669"/>
    <property type="project" value="TreeGrafter"/>
</dbReference>
<dbReference type="GO" id="GO:0043024">
    <property type="term" value="F:ribosomal small subunit binding"/>
    <property type="evidence" value="ECO:0007669"/>
    <property type="project" value="TreeGrafter"/>
</dbReference>
<dbReference type="GO" id="GO:0030490">
    <property type="term" value="P:maturation of SSU-rRNA"/>
    <property type="evidence" value="ECO:0007669"/>
    <property type="project" value="UniProtKB-UniRule"/>
</dbReference>
<dbReference type="Gene3D" id="3.30.300.20">
    <property type="match status" value="1"/>
</dbReference>
<dbReference type="HAMAP" id="MF_00003">
    <property type="entry name" value="RbfA"/>
    <property type="match status" value="1"/>
</dbReference>
<dbReference type="InterPro" id="IPR015946">
    <property type="entry name" value="KH_dom-like_a/b"/>
</dbReference>
<dbReference type="InterPro" id="IPR000238">
    <property type="entry name" value="RbfA"/>
</dbReference>
<dbReference type="InterPro" id="IPR023799">
    <property type="entry name" value="RbfA_dom_sf"/>
</dbReference>
<dbReference type="InterPro" id="IPR020053">
    <property type="entry name" value="Ribosome-bd_factorA_CS"/>
</dbReference>
<dbReference type="NCBIfam" id="NF001802">
    <property type="entry name" value="PRK00521.2-5"/>
    <property type="match status" value="1"/>
</dbReference>
<dbReference type="NCBIfam" id="TIGR00082">
    <property type="entry name" value="rbfA"/>
    <property type="match status" value="1"/>
</dbReference>
<dbReference type="PANTHER" id="PTHR33515">
    <property type="entry name" value="RIBOSOME-BINDING FACTOR A, CHLOROPLASTIC-RELATED"/>
    <property type="match status" value="1"/>
</dbReference>
<dbReference type="PANTHER" id="PTHR33515:SF1">
    <property type="entry name" value="RIBOSOME-BINDING FACTOR A, CHLOROPLASTIC-RELATED"/>
    <property type="match status" value="1"/>
</dbReference>
<dbReference type="Pfam" id="PF02033">
    <property type="entry name" value="RBFA"/>
    <property type="match status" value="1"/>
</dbReference>
<dbReference type="SUPFAM" id="SSF89919">
    <property type="entry name" value="Ribosome-binding factor A, RbfA"/>
    <property type="match status" value="1"/>
</dbReference>
<dbReference type="PROSITE" id="PS01319">
    <property type="entry name" value="RBFA"/>
    <property type="match status" value="1"/>
</dbReference>
<accession>B0CK12</accession>
<keyword id="KW-0963">Cytoplasm</keyword>
<keyword id="KW-0690">Ribosome biogenesis</keyword>
<gene>
    <name evidence="1" type="primary">rbfA</name>
    <name type="ordered locus">BSUIS_A2003</name>
</gene>
<organism>
    <name type="scientific">Brucella suis (strain ATCC 23445 / NCTC 10510)</name>
    <dbReference type="NCBI Taxonomy" id="470137"/>
    <lineage>
        <taxon>Bacteria</taxon>
        <taxon>Pseudomonadati</taxon>
        <taxon>Pseudomonadota</taxon>
        <taxon>Alphaproteobacteria</taxon>
        <taxon>Hyphomicrobiales</taxon>
        <taxon>Brucellaceae</taxon>
        <taxon>Brucella/Ochrobactrum group</taxon>
        <taxon>Brucella</taxon>
    </lineage>
</organism>
<comment type="function">
    <text evidence="1">One of several proteins that assist in the late maturation steps of the functional core of the 30S ribosomal subunit. Associates with free 30S ribosomal subunits (but not with 30S subunits that are part of 70S ribosomes or polysomes). Required for efficient processing of 16S rRNA. May interact with the 5'-terminal helix region of 16S rRNA.</text>
</comment>
<comment type="subunit">
    <text evidence="1">Monomer. Binds 30S ribosomal subunits, but not 50S ribosomal subunits or 70S ribosomes.</text>
</comment>
<comment type="subcellular location">
    <subcellularLocation>
        <location evidence="1">Cytoplasm</location>
    </subcellularLocation>
</comment>
<comment type="similarity">
    <text evidence="1">Belongs to the RbfA family.</text>
</comment>
<reference key="1">
    <citation type="submission" date="2007-12" db="EMBL/GenBank/DDBJ databases">
        <title>Brucella suis ATCC 23445 whole genome shotgun sequencing project.</title>
        <authorList>
            <person name="Setubal J.C."/>
            <person name="Bowns C."/>
            <person name="Boyle S."/>
            <person name="Crasta O.R."/>
            <person name="Czar M.J."/>
            <person name="Dharmanolla C."/>
            <person name="Gillespie J.J."/>
            <person name="Kenyon R.W."/>
            <person name="Lu J."/>
            <person name="Mane S."/>
            <person name="Mohapatra S."/>
            <person name="Nagrani S."/>
            <person name="Purkayastha A."/>
            <person name="Rajasimha H.K."/>
            <person name="Shallom J.M."/>
            <person name="Shallom S."/>
            <person name="Shukla M."/>
            <person name="Snyder E.E."/>
            <person name="Sobral B.W."/>
            <person name="Wattam A.R."/>
            <person name="Will R."/>
            <person name="Williams K."/>
            <person name="Yoo H."/>
            <person name="Bruce D."/>
            <person name="Detter C."/>
            <person name="Munk C."/>
            <person name="Brettin T.S."/>
        </authorList>
    </citation>
    <scope>NUCLEOTIDE SEQUENCE [LARGE SCALE GENOMIC DNA]</scope>
    <source>
        <strain>ATCC 23445 / NCTC 10510</strain>
    </source>
</reference>
<sequence length="150" mass="16603">MARSHDTKGSGGLSQRQLRVGEQVRHTLAQVLQRGEIRDDLIERTVISVSEVRMSPDLKIATCFITPLGSADPQAVIKALASHAKFIRGRVAPSLAQMKYMPEFRFRPDTSFDNFSKIDALLRSPEVARDLSHDDDEDGGADEAPRNGDE</sequence>